<organism>
    <name type="scientific">Piper cenocladum</name>
    <name type="common">Ant piper</name>
    <dbReference type="NCBI Taxonomy" id="398741"/>
    <lineage>
        <taxon>Eukaryota</taxon>
        <taxon>Viridiplantae</taxon>
        <taxon>Streptophyta</taxon>
        <taxon>Embryophyta</taxon>
        <taxon>Tracheophyta</taxon>
        <taxon>Spermatophyta</taxon>
        <taxon>Magnoliopsida</taxon>
        <taxon>Magnoliidae</taxon>
        <taxon>Piperales</taxon>
        <taxon>Piperaceae</taxon>
        <taxon>Piper</taxon>
    </lineage>
</organism>
<name>NDHK_PIPCE</name>
<keyword id="KW-0004">4Fe-4S</keyword>
<keyword id="KW-0150">Chloroplast</keyword>
<keyword id="KW-0408">Iron</keyword>
<keyword id="KW-0411">Iron-sulfur</keyword>
<keyword id="KW-0472">Membrane</keyword>
<keyword id="KW-0479">Metal-binding</keyword>
<keyword id="KW-0520">NAD</keyword>
<keyword id="KW-0521">NADP</keyword>
<keyword id="KW-0934">Plastid</keyword>
<keyword id="KW-0618">Plastoquinone</keyword>
<keyword id="KW-0874">Quinone</keyword>
<keyword id="KW-0793">Thylakoid</keyword>
<keyword id="KW-1278">Translocase</keyword>
<keyword id="KW-0813">Transport</keyword>
<protein>
    <recommendedName>
        <fullName evidence="1">NAD(P)H-quinone oxidoreductase subunit K, chloroplastic</fullName>
        <ecNumber evidence="1">7.1.1.-</ecNumber>
    </recommendedName>
    <alternativeName>
        <fullName evidence="1">NAD(P)H dehydrogenase subunit K</fullName>
    </alternativeName>
    <alternativeName>
        <fullName evidence="1">NADH-plastoquinone oxidoreductase subunit K</fullName>
    </alternativeName>
</protein>
<accession>Q06GQ6</accession>
<evidence type="ECO:0000255" key="1">
    <source>
        <dbReference type="HAMAP-Rule" id="MF_01356"/>
    </source>
</evidence>
<evidence type="ECO:0000305" key="2"/>
<sequence length="229" mass="25820">MNSMKFPLLDRTTQSSVISTTLNDLSNWSRLSSLWPLLYGTSCCFIEFASLIGSRFDFDRYGLVPRSSPRQADLILTAGTVTMKMAPSLVRLYEQMPEPKYVIAMGACTITGGMFSTDSYSTVRGVDKLIPVDVYLPGCPPKPEAILDAITKLRKKVSREIYEDKIGSQRENRYFTTNHKFHVPKSHVGRSTHIENYDQGLLSQSSSTPEIASENFFKYKSLVPNYDMN</sequence>
<proteinExistence type="inferred from homology"/>
<dbReference type="EC" id="7.1.1.-" evidence="1"/>
<dbReference type="EMBL" id="DQ887677">
    <property type="protein sequence ID" value="ABI14476.1"/>
    <property type="status" value="ALT_INIT"/>
    <property type="molecule type" value="Genomic_DNA"/>
</dbReference>
<dbReference type="RefSeq" id="YP_784477.2">
    <property type="nucleotide sequence ID" value="NC_008457.1"/>
</dbReference>
<dbReference type="SMR" id="Q06GQ6"/>
<dbReference type="GeneID" id="4363747"/>
<dbReference type="GO" id="GO:0009535">
    <property type="term" value="C:chloroplast thylakoid membrane"/>
    <property type="evidence" value="ECO:0007669"/>
    <property type="project" value="UniProtKB-SubCell"/>
</dbReference>
<dbReference type="GO" id="GO:0045271">
    <property type="term" value="C:respiratory chain complex I"/>
    <property type="evidence" value="ECO:0007669"/>
    <property type="project" value="TreeGrafter"/>
</dbReference>
<dbReference type="GO" id="GO:0051539">
    <property type="term" value="F:4 iron, 4 sulfur cluster binding"/>
    <property type="evidence" value="ECO:0007669"/>
    <property type="project" value="UniProtKB-KW"/>
</dbReference>
<dbReference type="GO" id="GO:0005506">
    <property type="term" value="F:iron ion binding"/>
    <property type="evidence" value="ECO:0007669"/>
    <property type="project" value="UniProtKB-UniRule"/>
</dbReference>
<dbReference type="GO" id="GO:0008137">
    <property type="term" value="F:NADH dehydrogenase (ubiquinone) activity"/>
    <property type="evidence" value="ECO:0007669"/>
    <property type="project" value="InterPro"/>
</dbReference>
<dbReference type="GO" id="GO:0048038">
    <property type="term" value="F:quinone binding"/>
    <property type="evidence" value="ECO:0007669"/>
    <property type="project" value="UniProtKB-KW"/>
</dbReference>
<dbReference type="GO" id="GO:0009060">
    <property type="term" value="P:aerobic respiration"/>
    <property type="evidence" value="ECO:0007669"/>
    <property type="project" value="TreeGrafter"/>
</dbReference>
<dbReference type="GO" id="GO:0015990">
    <property type="term" value="P:electron transport coupled proton transport"/>
    <property type="evidence" value="ECO:0007669"/>
    <property type="project" value="TreeGrafter"/>
</dbReference>
<dbReference type="GO" id="GO:0019684">
    <property type="term" value="P:photosynthesis, light reaction"/>
    <property type="evidence" value="ECO:0007669"/>
    <property type="project" value="UniProtKB-UniRule"/>
</dbReference>
<dbReference type="FunFam" id="3.40.50.12280:FF:000003">
    <property type="entry name" value="NAD(P)H-quinone oxidoreductase subunit K, chloroplastic"/>
    <property type="match status" value="1"/>
</dbReference>
<dbReference type="Gene3D" id="3.40.50.12280">
    <property type="match status" value="1"/>
</dbReference>
<dbReference type="HAMAP" id="MF_01356">
    <property type="entry name" value="NDH1_NuoB"/>
    <property type="match status" value="1"/>
</dbReference>
<dbReference type="InterPro" id="IPR006137">
    <property type="entry name" value="NADH_UbQ_OxRdtase-like_20kDa"/>
</dbReference>
<dbReference type="InterPro" id="IPR006138">
    <property type="entry name" value="NADH_UQ_OxRdtase_20Kd_su"/>
</dbReference>
<dbReference type="NCBIfam" id="TIGR01957">
    <property type="entry name" value="nuoB_fam"/>
    <property type="match status" value="1"/>
</dbReference>
<dbReference type="NCBIfam" id="NF005012">
    <property type="entry name" value="PRK06411.1"/>
    <property type="match status" value="1"/>
</dbReference>
<dbReference type="PANTHER" id="PTHR11995">
    <property type="entry name" value="NADH DEHYDROGENASE"/>
    <property type="match status" value="1"/>
</dbReference>
<dbReference type="PANTHER" id="PTHR11995:SF14">
    <property type="entry name" value="NADH DEHYDROGENASE [UBIQUINONE] IRON-SULFUR PROTEIN 7, MITOCHONDRIAL"/>
    <property type="match status" value="1"/>
</dbReference>
<dbReference type="Pfam" id="PF01058">
    <property type="entry name" value="Oxidored_q6"/>
    <property type="match status" value="1"/>
</dbReference>
<dbReference type="SUPFAM" id="SSF56770">
    <property type="entry name" value="HydA/Nqo6-like"/>
    <property type="match status" value="1"/>
</dbReference>
<dbReference type="PROSITE" id="PS01150">
    <property type="entry name" value="COMPLEX1_20K"/>
    <property type="match status" value="1"/>
</dbReference>
<reference key="1">
    <citation type="journal article" date="2006" name="BMC Evol. Biol.">
        <title>Complete plastid genome sequences of Drimys, Liriodendron, and Piper: implications for the phylogenetic relationships of magnoliids.</title>
        <authorList>
            <person name="Cai Z."/>
            <person name="Penaflor C."/>
            <person name="Kuehl J.V."/>
            <person name="Leebens-Mack J."/>
            <person name="Carlson J.E."/>
            <person name="dePamphilis C.W."/>
            <person name="Boore J.L."/>
            <person name="Jansen R.K."/>
        </authorList>
    </citation>
    <scope>NUCLEOTIDE SEQUENCE [LARGE SCALE GENOMIC DNA]</scope>
</reference>
<geneLocation type="chloroplast"/>
<comment type="function">
    <text evidence="1">NDH shuttles electrons from NAD(P)H:plastoquinone, via FMN and iron-sulfur (Fe-S) centers, to quinones in the photosynthetic chain and possibly in a chloroplast respiratory chain. The immediate electron acceptor for the enzyme in this species is believed to be plastoquinone. Couples the redox reaction to proton translocation, and thus conserves the redox energy in a proton gradient.</text>
</comment>
<comment type="catalytic activity">
    <reaction evidence="1">
        <text>a plastoquinone + NADH + (n+1) H(+)(in) = a plastoquinol + NAD(+) + n H(+)(out)</text>
        <dbReference type="Rhea" id="RHEA:42608"/>
        <dbReference type="Rhea" id="RHEA-COMP:9561"/>
        <dbReference type="Rhea" id="RHEA-COMP:9562"/>
        <dbReference type="ChEBI" id="CHEBI:15378"/>
        <dbReference type="ChEBI" id="CHEBI:17757"/>
        <dbReference type="ChEBI" id="CHEBI:57540"/>
        <dbReference type="ChEBI" id="CHEBI:57945"/>
        <dbReference type="ChEBI" id="CHEBI:62192"/>
    </reaction>
</comment>
<comment type="catalytic activity">
    <reaction evidence="1">
        <text>a plastoquinone + NADPH + (n+1) H(+)(in) = a plastoquinol + NADP(+) + n H(+)(out)</text>
        <dbReference type="Rhea" id="RHEA:42612"/>
        <dbReference type="Rhea" id="RHEA-COMP:9561"/>
        <dbReference type="Rhea" id="RHEA-COMP:9562"/>
        <dbReference type="ChEBI" id="CHEBI:15378"/>
        <dbReference type="ChEBI" id="CHEBI:17757"/>
        <dbReference type="ChEBI" id="CHEBI:57783"/>
        <dbReference type="ChEBI" id="CHEBI:58349"/>
        <dbReference type="ChEBI" id="CHEBI:62192"/>
    </reaction>
</comment>
<comment type="cofactor">
    <cofactor evidence="1">
        <name>[4Fe-4S] cluster</name>
        <dbReference type="ChEBI" id="CHEBI:49883"/>
    </cofactor>
    <text evidence="1">Binds 1 [4Fe-4S] cluster.</text>
</comment>
<comment type="subunit">
    <text evidence="1">NDH is composed of at least 16 different subunits, 5 of which are encoded in the nucleus.</text>
</comment>
<comment type="subcellular location">
    <subcellularLocation>
        <location evidence="1">Plastid</location>
        <location evidence="1">Chloroplast thylakoid membrane</location>
        <topology evidence="1">Peripheral membrane protein</topology>
        <orientation evidence="1">Stromal side</orientation>
    </subcellularLocation>
</comment>
<comment type="similarity">
    <text evidence="1">Belongs to the complex I 20 kDa subunit family.</text>
</comment>
<comment type="sequence caution" evidence="2">
    <conflict type="erroneous initiation">
        <sequence resource="EMBL-CDS" id="ABI14476"/>
    </conflict>
</comment>
<feature type="chain" id="PRO_0000358576" description="NAD(P)H-quinone oxidoreductase subunit K, chloroplastic">
    <location>
        <begin position="1"/>
        <end position="229"/>
    </location>
</feature>
<feature type="binding site" evidence="1">
    <location>
        <position position="43"/>
    </location>
    <ligand>
        <name>[4Fe-4S] cluster</name>
        <dbReference type="ChEBI" id="CHEBI:49883"/>
    </ligand>
</feature>
<feature type="binding site" evidence="1">
    <location>
        <position position="44"/>
    </location>
    <ligand>
        <name>[4Fe-4S] cluster</name>
        <dbReference type="ChEBI" id="CHEBI:49883"/>
    </ligand>
</feature>
<feature type="binding site" evidence="1">
    <location>
        <position position="108"/>
    </location>
    <ligand>
        <name>[4Fe-4S] cluster</name>
        <dbReference type="ChEBI" id="CHEBI:49883"/>
    </ligand>
</feature>
<feature type="binding site" evidence="1">
    <location>
        <position position="139"/>
    </location>
    <ligand>
        <name>[4Fe-4S] cluster</name>
        <dbReference type="ChEBI" id="CHEBI:49883"/>
    </ligand>
</feature>
<gene>
    <name evidence="1" type="primary">ndhK</name>
</gene>